<feature type="chain" id="PRO_0000280860" description="Enolase">
    <location>
        <begin position="1"/>
        <end position="432"/>
    </location>
</feature>
<feature type="active site" description="Proton donor" evidence="1">
    <location>
        <position position="208"/>
    </location>
</feature>
<feature type="active site" description="Proton acceptor" evidence="1">
    <location>
        <position position="343"/>
    </location>
</feature>
<feature type="binding site" evidence="1">
    <location>
        <position position="166"/>
    </location>
    <ligand>
        <name>(2R)-2-phosphoglycerate</name>
        <dbReference type="ChEBI" id="CHEBI:58289"/>
    </ligand>
</feature>
<feature type="binding site" evidence="1">
    <location>
        <position position="245"/>
    </location>
    <ligand>
        <name>Mg(2+)</name>
        <dbReference type="ChEBI" id="CHEBI:18420"/>
    </ligand>
</feature>
<feature type="binding site" evidence="1">
    <location>
        <position position="291"/>
    </location>
    <ligand>
        <name>Mg(2+)</name>
        <dbReference type="ChEBI" id="CHEBI:18420"/>
    </ligand>
</feature>
<feature type="binding site" evidence="1">
    <location>
        <position position="318"/>
    </location>
    <ligand>
        <name>Mg(2+)</name>
        <dbReference type="ChEBI" id="CHEBI:18420"/>
    </ligand>
</feature>
<feature type="binding site" evidence="1">
    <location>
        <position position="343"/>
    </location>
    <ligand>
        <name>(2R)-2-phosphoglycerate</name>
        <dbReference type="ChEBI" id="CHEBI:58289"/>
    </ligand>
</feature>
<feature type="binding site" evidence="1">
    <location>
        <position position="372"/>
    </location>
    <ligand>
        <name>(2R)-2-phosphoglycerate</name>
        <dbReference type="ChEBI" id="CHEBI:58289"/>
    </ligand>
</feature>
<feature type="binding site" evidence="1">
    <location>
        <position position="373"/>
    </location>
    <ligand>
        <name>(2R)-2-phosphoglycerate</name>
        <dbReference type="ChEBI" id="CHEBI:58289"/>
    </ligand>
</feature>
<feature type="binding site" evidence="1">
    <location>
        <position position="394"/>
    </location>
    <ligand>
        <name>(2R)-2-phosphoglycerate</name>
        <dbReference type="ChEBI" id="CHEBI:58289"/>
    </ligand>
</feature>
<keyword id="KW-0963">Cytoplasm</keyword>
<keyword id="KW-0324">Glycolysis</keyword>
<keyword id="KW-0456">Lyase</keyword>
<keyword id="KW-0460">Magnesium</keyword>
<keyword id="KW-0479">Metal-binding</keyword>
<keyword id="KW-0964">Secreted</keyword>
<reference key="1">
    <citation type="journal article" date="2006" name="Proc. Natl. Acad. Sci. U.S.A.">
        <title>Genome reduction in Leptospira borgpetersenii reflects limited transmission potential.</title>
        <authorList>
            <person name="Bulach D.M."/>
            <person name="Zuerner R.L."/>
            <person name="Wilson P."/>
            <person name="Seemann T."/>
            <person name="McGrath A."/>
            <person name="Cullen P.A."/>
            <person name="Davis J."/>
            <person name="Johnson M."/>
            <person name="Kuczek E."/>
            <person name="Alt D.P."/>
            <person name="Peterson-Burch B."/>
            <person name="Coppel R.L."/>
            <person name="Rood J.I."/>
            <person name="Davies J.K."/>
            <person name="Adler B."/>
        </authorList>
    </citation>
    <scope>NUCLEOTIDE SEQUENCE [LARGE SCALE GENOMIC DNA]</scope>
    <source>
        <strain>L550</strain>
    </source>
</reference>
<evidence type="ECO:0000255" key="1">
    <source>
        <dbReference type="HAMAP-Rule" id="MF_00318"/>
    </source>
</evidence>
<name>ENO_LEPBL</name>
<comment type="function">
    <text evidence="1">Catalyzes the reversible conversion of 2-phosphoglycerate (2-PG) into phosphoenolpyruvate (PEP). It is essential for the degradation of carbohydrates via glycolysis.</text>
</comment>
<comment type="catalytic activity">
    <reaction evidence="1">
        <text>(2R)-2-phosphoglycerate = phosphoenolpyruvate + H2O</text>
        <dbReference type="Rhea" id="RHEA:10164"/>
        <dbReference type="ChEBI" id="CHEBI:15377"/>
        <dbReference type="ChEBI" id="CHEBI:58289"/>
        <dbReference type="ChEBI" id="CHEBI:58702"/>
        <dbReference type="EC" id="4.2.1.11"/>
    </reaction>
</comment>
<comment type="cofactor">
    <cofactor evidence="1">
        <name>Mg(2+)</name>
        <dbReference type="ChEBI" id="CHEBI:18420"/>
    </cofactor>
    <text evidence="1">Binds a second Mg(2+) ion via substrate during catalysis.</text>
</comment>
<comment type="pathway">
    <text evidence="1">Carbohydrate degradation; glycolysis; pyruvate from D-glyceraldehyde 3-phosphate: step 4/5.</text>
</comment>
<comment type="subcellular location">
    <subcellularLocation>
        <location evidence="1">Cytoplasm</location>
    </subcellularLocation>
    <subcellularLocation>
        <location evidence="1">Secreted</location>
    </subcellularLocation>
    <subcellularLocation>
        <location evidence="1">Cell surface</location>
    </subcellularLocation>
    <text evidence="1">Fractions of enolase are present in both the cytoplasm and on the cell surface.</text>
</comment>
<comment type="similarity">
    <text evidence="1">Belongs to the enolase family.</text>
</comment>
<gene>
    <name evidence="1" type="primary">eno</name>
    <name type="ordered locus">LBL_1785</name>
</gene>
<accession>Q050L5</accession>
<proteinExistence type="inferred from homology"/>
<protein>
    <recommendedName>
        <fullName evidence="1">Enolase</fullName>
        <ecNumber evidence="1">4.2.1.11</ecNumber>
    </recommendedName>
    <alternativeName>
        <fullName evidence="1">2-phospho-D-glycerate hydro-lyase</fullName>
    </alternativeName>
    <alternativeName>
        <fullName evidence="1">2-phosphoglycerate dehydratase</fullName>
    </alternativeName>
</protein>
<organism>
    <name type="scientific">Leptospira borgpetersenii serovar Hardjo-bovis (strain L550)</name>
    <dbReference type="NCBI Taxonomy" id="355276"/>
    <lineage>
        <taxon>Bacteria</taxon>
        <taxon>Pseudomonadati</taxon>
        <taxon>Spirochaetota</taxon>
        <taxon>Spirochaetia</taxon>
        <taxon>Leptospirales</taxon>
        <taxon>Leptospiraceae</taxon>
        <taxon>Leptospira</taxon>
    </lineage>
</organism>
<sequence>MSHNSQIQKIQAREIIDSRGNPTVEVDVTLMDGSFGRAAVPSGASTGEYEAVELRDGDKQRYLGKGVLKAVEHVNVKIQEILKGQDALDQNRVDQLMLDADGTKNKGKLGANAILGTSLAVAKAAAFHSKLPLYRYIGGNFARELPVPMMNIINGGAHADNNVDFQEFMILPVGAKNFREGLRMGAEVFHSLKSVLKGKKLNTAVGDEGGFAPDLTSNVEAIEVILQAIEKAGYKPEKDVLLGLDAASSEFYDKSKKKYVLGAENNKEFSSAELVDYYANLVSKYPIITIEDGLDENDWEGWKLLSEKLGKKIQLVGDDLFVTNIEKLSKGITSGVGNSILIKVNQIGSLSETLASIEMAKKAKYTNVVSHRSGETEDVTISHIAVATNAGQIKTGSLSRTDRIAKYNELLRIEEELGKSAVYKGKETFYNL</sequence>
<dbReference type="EC" id="4.2.1.11" evidence="1"/>
<dbReference type="EMBL" id="CP000348">
    <property type="protein sequence ID" value="ABJ79230.1"/>
    <property type="molecule type" value="Genomic_DNA"/>
</dbReference>
<dbReference type="RefSeq" id="WP_011670344.1">
    <property type="nucleotide sequence ID" value="NC_008508.1"/>
</dbReference>
<dbReference type="SMR" id="Q050L5"/>
<dbReference type="KEGG" id="lbl:LBL_1785"/>
<dbReference type="PATRIC" id="fig|355276.3.peg.2257"/>
<dbReference type="HOGENOM" id="CLU_031223_2_1_12"/>
<dbReference type="UniPathway" id="UPA00109">
    <property type="reaction ID" value="UER00187"/>
</dbReference>
<dbReference type="GO" id="GO:0009986">
    <property type="term" value="C:cell surface"/>
    <property type="evidence" value="ECO:0007669"/>
    <property type="project" value="UniProtKB-SubCell"/>
</dbReference>
<dbReference type="GO" id="GO:0005576">
    <property type="term" value="C:extracellular region"/>
    <property type="evidence" value="ECO:0007669"/>
    <property type="project" value="UniProtKB-SubCell"/>
</dbReference>
<dbReference type="GO" id="GO:0000015">
    <property type="term" value="C:phosphopyruvate hydratase complex"/>
    <property type="evidence" value="ECO:0007669"/>
    <property type="project" value="InterPro"/>
</dbReference>
<dbReference type="GO" id="GO:0000287">
    <property type="term" value="F:magnesium ion binding"/>
    <property type="evidence" value="ECO:0007669"/>
    <property type="project" value="UniProtKB-UniRule"/>
</dbReference>
<dbReference type="GO" id="GO:0004634">
    <property type="term" value="F:phosphopyruvate hydratase activity"/>
    <property type="evidence" value="ECO:0007669"/>
    <property type="project" value="UniProtKB-UniRule"/>
</dbReference>
<dbReference type="GO" id="GO:0006096">
    <property type="term" value="P:glycolytic process"/>
    <property type="evidence" value="ECO:0007669"/>
    <property type="project" value="UniProtKB-UniRule"/>
</dbReference>
<dbReference type="CDD" id="cd03313">
    <property type="entry name" value="enolase"/>
    <property type="match status" value="1"/>
</dbReference>
<dbReference type="FunFam" id="3.20.20.120:FF:000001">
    <property type="entry name" value="Enolase"/>
    <property type="match status" value="1"/>
</dbReference>
<dbReference type="FunFam" id="3.30.390.10:FF:000001">
    <property type="entry name" value="Enolase"/>
    <property type="match status" value="1"/>
</dbReference>
<dbReference type="Gene3D" id="3.20.20.120">
    <property type="entry name" value="Enolase-like C-terminal domain"/>
    <property type="match status" value="1"/>
</dbReference>
<dbReference type="Gene3D" id="3.30.390.10">
    <property type="entry name" value="Enolase-like, N-terminal domain"/>
    <property type="match status" value="1"/>
</dbReference>
<dbReference type="HAMAP" id="MF_00318">
    <property type="entry name" value="Enolase"/>
    <property type="match status" value="1"/>
</dbReference>
<dbReference type="InterPro" id="IPR000941">
    <property type="entry name" value="Enolase"/>
</dbReference>
<dbReference type="InterPro" id="IPR036849">
    <property type="entry name" value="Enolase-like_C_sf"/>
</dbReference>
<dbReference type="InterPro" id="IPR029017">
    <property type="entry name" value="Enolase-like_N"/>
</dbReference>
<dbReference type="InterPro" id="IPR020810">
    <property type="entry name" value="Enolase_C"/>
</dbReference>
<dbReference type="InterPro" id="IPR020809">
    <property type="entry name" value="Enolase_CS"/>
</dbReference>
<dbReference type="InterPro" id="IPR020811">
    <property type="entry name" value="Enolase_N"/>
</dbReference>
<dbReference type="NCBIfam" id="TIGR01060">
    <property type="entry name" value="eno"/>
    <property type="match status" value="1"/>
</dbReference>
<dbReference type="PANTHER" id="PTHR11902">
    <property type="entry name" value="ENOLASE"/>
    <property type="match status" value="1"/>
</dbReference>
<dbReference type="PANTHER" id="PTHR11902:SF1">
    <property type="entry name" value="ENOLASE"/>
    <property type="match status" value="1"/>
</dbReference>
<dbReference type="Pfam" id="PF00113">
    <property type="entry name" value="Enolase_C"/>
    <property type="match status" value="1"/>
</dbReference>
<dbReference type="Pfam" id="PF03952">
    <property type="entry name" value="Enolase_N"/>
    <property type="match status" value="1"/>
</dbReference>
<dbReference type="PIRSF" id="PIRSF001400">
    <property type="entry name" value="Enolase"/>
    <property type="match status" value="1"/>
</dbReference>
<dbReference type="PRINTS" id="PR00148">
    <property type="entry name" value="ENOLASE"/>
</dbReference>
<dbReference type="SFLD" id="SFLDS00001">
    <property type="entry name" value="Enolase"/>
    <property type="match status" value="1"/>
</dbReference>
<dbReference type="SFLD" id="SFLDF00002">
    <property type="entry name" value="enolase"/>
    <property type="match status" value="1"/>
</dbReference>
<dbReference type="SMART" id="SM01192">
    <property type="entry name" value="Enolase_C"/>
    <property type="match status" value="1"/>
</dbReference>
<dbReference type="SMART" id="SM01193">
    <property type="entry name" value="Enolase_N"/>
    <property type="match status" value="1"/>
</dbReference>
<dbReference type="SUPFAM" id="SSF51604">
    <property type="entry name" value="Enolase C-terminal domain-like"/>
    <property type="match status" value="1"/>
</dbReference>
<dbReference type="SUPFAM" id="SSF54826">
    <property type="entry name" value="Enolase N-terminal domain-like"/>
    <property type="match status" value="1"/>
</dbReference>
<dbReference type="PROSITE" id="PS00164">
    <property type="entry name" value="ENOLASE"/>
    <property type="match status" value="1"/>
</dbReference>